<comment type="function">
    <text evidence="1">Required for the formation of a threonylcarbamoyl group on adenosine at position 37 (t(6)A37) in tRNAs that read codons beginning with adenine. Is a component of the KEOPS complex that is probably involved in the transfer of the threonylcarbamoyl moiety of threonylcarbamoyl-AMP (TC-AMP) to the N6 group of A37. Kae1 likely plays a direct catalytic role in this reaction, but requires other protein(s) of the complex to fulfill this activity.</text>
</comment>
<comment type="catalytic activity">
    <reaction evidence="1">
        <text>L-threonylcarbamoyladenylate + adenosine(37) in tRNA = N(6)-L-threonylcarbamoyladenosine(37) in tRNA + AMP + H(+)</text>
        <dbReference type="Rhea" id="RHEA:37059"/>
        <dbReference type="Rhea" id="RHEA-COMP:10162"/>
        <dbReference type="Rhea" id="RHEA-COMP:10163"/>
        <dbReference type="ChEBI" id="CHEBI:15378"/>
        <dbReference type="ChEBI" id="CHEBI:73682"/>
        <dbReference type="ChEBI" id="CHEBI:74411"/>
        <dbReference type="ChEBI" id="CHEBI:74418"/>
        <dbReference type="ChEBI" id="CHEBI:456215"/>
        <dbReference type="EC" id="2.3.1.234"/>
    </reaction>
</comment>
<comment type="cofactor">
    <cofactor evidence="1">
        <name>Fe(2+)</name>
        <dbReference type="ChEBI" id="CHEBI:29033"/>
    </cofactor>
    <text evidence="1">Binds 1 Fe(2+) ion per subunit.</text>
</comment>
<comment type="subunit">
    <text evidence="1">Monomer. Component of the KEOPS complex that consists of Kae1, Bud32, Cgi121 and Pcc1; the whole complex dimerizes.</text>
</comment>
<comment type="subcellular location">
    <subcellularLocation>
        <location evidence="1">Cytoplasm</location>
    </subcellularLocation>
</comment>
<comment type="similarity">
    <text evidence="1">Belongs to the KAE1 / TsaD family.</text>
</comment>
<sequence>MIALGIEGTAHTLGIGIVTENKVLANVFDTLKTEKGGIHPKEAAEHHAKLLKPLLRKALEEAGVSMEDIDVIAFSQGPGLGPALRVVATAARALAIKYNKPIVGVNHCIAHVEITKMFGVKDPVGLYVSGGNTQVLALEGGRYRVFGETLDIGIGNALDVFARELGLGFPGGPKIEKLALKGEKYIELPYAVKGMDLSFSGLLTEAIRKYKSGKYRVEDLAYSFQETAFAALVEVTERALAHTEKEEVVLVGGVAANNRLREMLRIMAEDRGVKFFVPPYDLCRDNGAMIAYTGLRMYKAGIKFKLEETIVKQKFRTDEVEVVW</sequence>
<gene>
    <name evidence="1" type="primary">kae1</name>
    <name type="ordered locus">PF0172</name>
</gene>
<proteinExistence type="inferred from homology"/>
<organism>
    <name type="scientific">Pyrococcus furiosus (strain ATCC 43587 / DSM 3638 / JCM 8422 / Vc1)</name>
    <dbReference type="NCBI Taxonomy" id="186497"/>
    <lineage>
        <taxon>Archaea</taxon>
        <taxon>Methanobacteriati</taxon>
        <taxon>Methanobacteriota</taxon>
        <taxon>Thermococci</taxon>
        <taxon>Thermococcales</taxon>
        <taxon>Thermococcaceae</taxon>
        <taxon>Pyrococcus</taxon>
    </lineage>
</organism>
<name>KAE1_PYRFU</name>
<dbReference type="EC" id="2.3.1.234" evidence="1"/>
<dbReference type="EMBL" id="AE009950">
    <property type="protein sequence ID" value="AAL80296.1"/>
    <property type="molecule type" value="Genomic_DNA"/>
</dbReference>
<dbReference type="RefSeq" id="WP_011011285.1">
    <property type="nucleotide sequence ID" value="NZ_CP023154.1"/>
</dbReference>
<dbReference type="SMR" id="Q8U4B6"/>
<dbReference type="STRING" id="186497.PF0172"/>
<dbReference type="PaxDb" id="186497-PF0172"/>
<dbReference type="KEGG" id="pfu:PF0172"/>
<dbReference type="PATRIC" id="fig|186497.12.peg.179"/>
<dbReference type="eggNOG" id="arCOG01183">
    <property type="taxonomic scope" value="Archaea"/>
</dbReference>
<dbReference type="HOGENOM" id="CLU_023208_2_2_2"/>
<dbReference type="OrthoDB" id="6818at2157"/>
<dbReference type="PhylomeDB" id="Q8U4B6"/>
<dbReference type="Proteomes" id="UP000001013">
    <property type="component" value="Chromosome"/>
</dbReference>
<dbReference type="GO" id="GO:0005737">
    <property type="term" value="C:cytoplasm"/>
    <property type="evidence" value="ECO:0007669"/>
    <property type="project" value="UniProtKB-SubCell"/>
</dbReference>
<dbReference type="GO" id="GO:0000408">
    <property type="term" value="C:EKC/KEOPS complex"/>
    <property type="evidence" value="ECO:0007669"/>
    <property type="project" value="InterPro"/>
</dbReference>
<dbReference type="GO" id="GO:0005506">
    <property type="term" value="F:iron ion binding"/>
    <property type="evidence" value="ECO:0007669"/>
    <property type="project" value="UniProtKB-UniRule"/>
</dbReference>
<dbReference type="GO" id="GO:0061711">
    <property type="term" value="F:N(6)-L-threonylcarbamoyladenine synthase activity"/>
    <property type="evidence" value="ECO:0007669"/>
    <property type="project" value="UniProtKB-EC"/>
</dbReference>
<dbReference type="GO" id="GO:0002949">
    <property type="term" value="P:tRNA threonylcarbamoyladenosine modification"/>
    <property type="evidence" value="ECO:0007669"/>
    <property type="project" value="UniProtKB-UniRule"/>
</dbReference>
<dbReference type="CDD" id="cd24131">
    <property type="entry name" value="ASKHA_NBD_Kae1_arch_bac"/>
    <property type="match status" value="1"/>
</dbReference>
<dbReference type="FunFam" id="3.30.420.40:FF:000038">
    <property type="entry name" value="Probable tRNA N6-adenosine threonylcarbamoyltransferase"/>
    <property type="match status" value="1"/>
</dbReference>
<dbReference type="Gene3D" id="3.30.420.40">
    <property type="match status" value="2"/>
</dbReference>
<dbReference type="HAMAP" id="MF_01446">
    <property type="entry name" value="Kae1"/>
    <property type="match status" value="1"/>
</dbReference>
<dbReference type="InterPro" id="IPR043129">
    <property type="entry name" value="ATPase_NBD"/>
</dbReference>
<dbReference type="InterPro" id="IPR000905">
    <property type="entry name" value="Gcp-like_dom"/>
</dbReference>
<dbReference type="InterPro" id="IPR017861">
    <property type="entry name" value="KAE1/TsaD"/>
</dbReference>
<dbReference type="InterPro" id="IPR034680">
    <property type="entry name" value="Kae1_archaea_euk"/>
</dbReference>
<dbReference type="InterPro" id="IPR017860">
    <property type="entry name" value="Peptidase_M22_CS"/>
</dbReference>
<dbReference type="NCBIfam" id="TIGR03722">
    <property type="entry name" value="arch_KAE1"/>
    <property type="match status" value="1"/>
</dbReference>
<dbReference type="NCBIfam" id="TIGR00329">
    <property type="entry name" value="gcp_kae1"/>
    <property type="match status" value="1"/>
</dbReference>
<dbReference type="NCBIfam" id="NF007174">
    <property type="entry name" value="PRK09605.1"/>
    <property type="match status" value="1"/>
</dbReference>
<dbReference type="PANTHER" id="PTHR11735">
    <property type="entry name" value="TRNA N6-ADENOSINE THREONYLCARBAMOYLTRANSFERASE"/>
    <property type="match status" value="1"/>
</dbReference>
<dbReference type="PANTHER" id="PTHR11735:SF14">
    <property type="entry name" value="TRNA N6-ADENOSINE THREONYLCARBAMOYLTRANSFERASE"/>
    <property type="match status" value="1"/>
</dbReference>
<dbReference type="Pfam" id="PF00814">
    <property type="entry name" value="TsaD"/>
    <property type="match status" value="1"/>
</dbReference>
<dbReference type="PRINTS" id="PR00789">
    <property type="entry name" value="OSIALOPTASE"/>
</dbReference>
<dbReference type="SUPFAM" id="SSF53067">
    <property type="entry name" value="Actin-like ATPase domain"/>
    <property type="match status" value="1"/>
</dbReference>
<dbReference type="PROSITE" id="PS01016">
    <property type="entry name" value="GLYCOPROTEASE"/>
    <property type="match status" value="1"/>
</dbReference>
<protein>
    <recommendedName>
        <fullName evidence="1">tRNA N6-adenosine threonylcarbamoyltransferase</fullName>
        <ecNumber evidence="1">2.3.1.234</ecNumber>
    </recommendedName>
    <alternativeName>
        <fullName evidence="1">N6-L-threonylcarbamoyladenine synthase</fullName>
        <shortName evidence="1">t(6)A synthase</shortName>
    </alternativeName>
    <alternativeName>
        <fullName evidence="1">t(6)A37 threonylcarbamoyladenosine biosynthesis protein Kae1</fullName>
    </alternativeName>
    <alternativeName>
        <fullName evidence="1">tRNA threonylcarbamoyladenosine biosynthesis protein Kae1</fullName>
    </alternativeName>
</protein>
<accession>Q8U4B6</accession>
<feature type="chain" id="PRO_0000303641" description="tRNA N6-adenosine threonylcarbamoyltransferase">
    <location>
        <begin position="1"/>
        <end position="324"/>
    </location>
</feature>
<feature type="binding site" evidence="1">
    <location>
        <position position="107"/>
    </location>
    <ligand>
        <name>Fe cation</name>
        <dbReference type="ChEBI" id="CHEBI:24875"/>
    </ligand>
</feature>
<feature type="binding site" evidence="1">
    <location>
        <position position="111"/>
    </location>
    <ligand>
        <name>Fe cation</name>
        <dbReference type="ChEBI" id="CHEBI:24875"/>
    </ligand>
</feature>
<feature type="binding site" evidence="1">
    <location>
        <begin position="127"/>
        <end position="131"/>
    </location>
    <ligand>
        <name>substrate</name>
    </ligand>
</feature>
<feature type="binding site" evidence="1">
    <location>
        <position position="127"/>
    </location>
    <ligand>
        <name>Fe cation</name>
        <dbReference type="ChEBI" id="CHEBI:24875"/>
    </ligand>
</feature>
<feature type="binding site" evidence="1">
    <location>
        <position position="159"/>
    </location>
    <ligand>
        <name>substrate</name>
    </ligand>
</feature>
<feature type="binding site" evidence="1">
    <location>
        <position position="172"/>
    </location>
    <ligand>
        <name>substrate</name>
    </ligand>
</feature>
<feature type="binding site" evidence="1">
    <location>
        <position position="176"/>
    </location>
    <ligand>
        <name>substrate</name>
    </ligand>
</feature>
<feature type="binding site" evidence="1">
    <location>
        <position position="257"/>
    </location>
    <ligand>
        <name>substrate</name>
    </ligand>
</feature>
<feature type="binding site" evidence="1">
    <location>
        <position position="285"/>
    </location>
    <ligand>
        <name>Fe cation</name>
        <dbReference type="ChEBI" id="CHEBI:24875"/>
    </ligand>
</feature>
<evidence type="ECO:0000255" key="1">
    <source>
        <dbReference type="HAMAP-Rule" id="MF_01446"/>
    </source>
</evidence>
<reference key="1">
    <citation type="journal article" date="1999" name="Genetics">
        <title>Divergence of the hyperthermophilic archaea Pyrococcus furiosus and P. horikoshii inferred from complete genomic sequences.</title>
        <authorList>
            <person name="Maeder D.L."/>
            <person name="Weiss R.B."/>
            <person name="Dunn D.M."/>
            <person name="Cherry J.L."/>
            <person name="Gonzalez J.M."/>
            <person name="DiRuggiero J."/>
            <person name="Robb F.T."/>
        </authorList>
    </citation>
    <scope>NUCLEOTIDE SEQUENCE [LARGE SCALE GENOMIC DNA]</scope>
    <source>
        <strain>ATCC 43587 / DSM 3638 / JCM 8422 / Vc1</strain>
    </source>
</reference>
<keyword id="KW-0012">Acyltransferase</keyword>
<keyword id="KW-0963">Cytoplasm</keyword>
<keyword id="KW-0408">Iron</keyword>
<keyword id="KW-0479">Metal-binding</keyword>
<keyword id="KW-1185">Reference proteome</keyword>
<keyword id="KW-0808">Transferase</keyword>
<keyword id="KW-0819">tRNA processing</keyword>